<evidence type="ECO:0000255" key="1">
    <source>
        <dbReference type="HAMAP-Rule" id="MF_01544"/>
    </source>
</evidence>
<keyword id="KW-0997">Cell inner membrane</keyword>
<keyword id="KW-1003">Cell membrane</keyword>
<keyword id="KW-0472">Membrane</keyword>
<keyword id="KW-1185">Reference proteome</keyword>
<keyword id="KW-0812">Transmembrane</keyword>
<keyword id="KW-1133">Transmembrane helix</keyword>
<keyword id="KW-0813">Transport</keyword>
<comment type="function">
    <text evidence="1">Forms an efflux pump with AaeB.</text>
</comment>
<comment type="subcellular location">
    <subcellularLocation>
        <location evidence="1">Cell inner membrane</location>
        <topology evidence="1">Single-pass membrane protein</topology>
    </subcellularLocation>
</comment>
<comment type="similarity">
    <text evidence="1">Belongs to the membrane fusion protein (MFP) (TC 8.A.1) family.</text>
</comment>
<reference key="1">
    <citation type="journal article" date="2002" name="Nucleic Acids Res.">
        <title>Genome sequence of Shigella flexneri 2a: insights into pathogenicity through comparison with genomes of Escherichia coli K12 and O157.</title>
        <authorList>
            <person name="Jin Q."/>
            <person name="Yuan Z."/>
            <person name="Xu J."/>
            <person name="Wang Y."/>
            <person name="Shen Y."/>
            <person name="Lu W."/>
            <person name="Wang J."/>
            <person name="Liu H."/>
            <person name="Yang J."/>
            <person name="Yang F."/>
            <person name="Zhang X."/>
            <person name="Zhang J."/>
            <person name="Yang G."/>
            <person name="Wu H."/>
            <person name="Qu D."/>
            <person name="Dong J."/>
            <person name="Sun L."/>
            <person name="Xue Y."/>
            <person name="Zhao A."/>
            <person name="Gao Y."/>
            <person name="Zhu J."/>
            <person name="Kan B."/>
            <person name="Ding K."/>
            <person name="Chen S."/>
            <person name="Cheng H."/>
            <person name="Yao Z."/>
            <person name="He B."/>
            <person name="Chen R."/>
            <person name="Ma D."/>
            <person name="Qiang B."/>
            <person name="Wen Y."/>
            <person name="Hou Y."/>
            <person name="Yu J."/>
        </authorList>
    </citation>
    <scope>NUCLEOTIDE SEQUENCE [LARGE SCALE GENOMIC DNA]</scope>
    <source>
        <strain>301 / Serotype 2a</strain>
    </source>
</reference>
<reference key="2">
    <citation type="journal article" date="2003" name="Infect. Immun.">
        <title>Complete genome sequence and comparative genomics of Shigella flexneri serotype 2a strain 2457T.</title>
        <authorList>
            <person name="Wei J."/>
            <person name="Goldberg M.B."/>
            <person name="Burland V."/>
            <person name="Venkatesan M.M."/>
            <person name="Deng W."/>
            <person name="Fournier G."/>
            <person name="Mayhew G.F."/>
            <person name="Plunkett G. III"/>
            <person name="Rose D.J."/>
            <person name="Darling A."/>
            <person name="Mau B."/>
            <person name="Perna N.T."/>
            <person name="Payne S.M."/>
            <person name="Runyen-Janecky L.J."/>
            <person name="Zhou S."/>
            <person name="Schwartz D.C."/>
            <person name="Blattner F.R."/>
        </authorList>
    </citation>
    <scope>NUCLEOTIDE SEQUENCE [LARGE SCALE GENOMIC DNA]</scope>
    <source>
        <strain>ATCC 700930 / 2457T / Serotype 2a</strain>
    </source>
</reference>
<dbReference type="EMBL" id="AE005674">
    <property type="protein sequence ID" value="AAN44745.1"/>
    <property type="molecule type" value="Genomic_DNA"/>
</dbReference>
<dbReference type="EMBL" id="AE014073">
    <property type="protein sequence ID" value="AAP18555.1"/>
    <property type="molecule type" value="Genomic_DNA"/>
</dbReference>
<dbReference type="RefSeq" id="WP_000854019.1">
    <property type="nucleotide sequence ID" value="NZ_WPGW01000026.1"/>
</dbReference>
<dbReference type="SMR" id="Q83Q03"/>
<dbReference type="STRING" id="198214.SF3281"/>
<dbReference type="PaxDb" id="198214-SF3281"/>
<dbReference type="KEGG" id="sfl:SF3281"/>
<dbReference type="KEGG" id="sfx:S3496"/>
<dbReference type="PATRIC" id="fig|198214.7.peg.3887"/>
<dbReference type="HOGENOM" id="CLU_018816_15_2_6"/>
<dbReference type="Proteomes" id="UP000001006">
    <property type="component" value="Chromosome"/>
</dbReference>
<dbReference type="Proteomes" id="UP000002673">
    <property type="component" value="Chromosome"/>
</dbReference>
<dbReference type="GO" id="GO:0005886">
    <property type="term" value="C:plasma membrane"/>
    <property type="evidence" value="ECO:0007669"/>
    <property type="project" value="UniProtKB-SubCell"/>
</dbReference>
<dbReference type="GO" id="GO:0022857">
    <property type="term" value="F:transmembrane transporter activity"/>
    <property type="evidence" value="ECO:0007669"/>
    <property type="project" value="UniProtKB-UniRule"/>
</dbReference>
<dbReference type="FunFam" id="2.40.30.170:FF:000002">
    <property type="entry name" value="p-hydroxybenzoic acid efflux pump subunit AaeA"/>
    <property type="match status" value="1"/>
</dbReference>
<dbReference type="FunFam" id="2.40.50.100:FF:000018">
    <property type="entry name" value="p-hydroxybenzoic acid efflux pump subunit AaeA"/>
    <property type="match status" value="1"/>
</dbReference>
<dbReference type="Gene3D" id="2.40.30.170">
    <property type="match status" value="1"/>
</dbReference>
<dbReference type="Gene3D" id="2.40.50.100">
    <property type="match status" value="1"/>
</dbReference>
<dbReference type="HAMAP" id="MF_01544">
    <property type="entry name" value="AaeA"/>
    <property type="match status" value="1"/>
</dbReference>
<dbReference type="InterPro" id="IPR043602">
    <property type="entry name" value="CusB-like_dom_1"/>
</dbReference>
<dbReference type="InterPro" id="IPR032317">
    <property type="entry name" value="CusB_D23"/>
</dbReference>
<dbReference type="InterPro" id="IPR050393">
    <property type="entry name" value="MFP_Efflux_Pump"/>
</dbReference>
<dbReference type="InterPro" id="IPR022871">
    <property type="entry name" value="PHBA_efflux_pump_AaeA"/>
</dbReference>
<dbReference type="InterPro" id="IPR006143">
    <property type="entry name" value="RND_pump_MFP"/>
</dbReference>
<dbReference type="NCBIfam" id="NF007850">
    <property type="entry name" value="PRK10559.1"/>
    <property type="match status" value="1"/>
</dbReference>
<dbReference type="NCBIfam" id="TIGR01730">
    <property type="entry name" value="RND_mfp"/>
    <property type="match status" value="1"/>
</dbReference>
<dbReference type="PANTHER" id="PTHR30367:SF12">
    <property type="entry name" value="P-HYDROXYBENZOIC ACID EFFLUX PUMP SUBUNIT AAEA"/>
    <property type="match status" value="1"/>
</dbReference>
<dbReference type="PANTHER" id="PTHR30367">
    <property type="entry name" value="P-HYDROXYBENZOIC ACID EFFLUX PUMP SUBUNIT AAEA-RELATED"/>
    <property type="match status" value="1"/>
</dbReference>
<dbReference type="Pfam" id="PF00529">
    <property type="entry name" value="CusB_dom_1"/>
    <property type="match status" value="1"/>
</dbReference>
<dbReference type="Pfam" id="PF16576">
    <property type="entry name" value="HlyD_D23"/>
    <property type="match status" value="1"/>
</dbReference>
<dbReference type="SUPFAM" id="SSF111369">
    <property type="entry name" value="HlyD-like secretion proteins"/>
    <property type="match status" value="1"/>
</dbReference>
<organism>
    <name type="scientific">Shigella flexneri</name>
    <dbReference type="NCBI Taxonomy" id="623"/>
    <lineage>
        <taxon>Bacteria</taxon>
        <taxon>Pseudomonadati</taxon>
        <taxon>Pseudomonadota</taxon>
        <taxon>Gammaproteobacteria</taxon>
        <taxon>Enterobacterales</taxon>
        <taxon>Enterobacteriaceae</taxon>
        <taxon>Shigella</taxon>
    </lineage>
</organism>
<name>AAEA_SHIFL</name>
<gene>
    <name evidence="1" type="primary">aaeA</name>
    <name type="ordered locus">SF3281</name>
    <name type="ordered locus">S3496</name>
</gene>
<proteinExistence type="inferred from homology"/>
<feature type="chain" id="PRO_0000201857" description="p-hydroxybenzoic acid efflux pump subunit AaeA">
    <location>
        <begin position="1"/>
        <end position="310"/>
    </location>
</feature>
<feature type="transmembrane region" description="Helical" evidence="1">
    <location>
        <begin position="12"/>
        <end position="32"/>
    </location>
</feature>
<protein>
    <recommendedName>
        <fullName evidence="1">p-hydroxybenzoic acid efflux pump subunit AaeA</fullName>
        <shortName evidence="1">pHBA efflux pump protein A</shortName>
    </recommendedName>
</protein>
<sequence>MKTLIRKFSRTAITVVLVILAFIAIFNAWVYYTESPWTRDARFSADVVAIAPDVSGLITQVNVHDNQLVKKGQILFTIDQPRYQKALEEAQADVAYYQVLAQEKRQEAGRRNRLGVQAMSREEIDQANNVLQTVLHQLAKAQATRDLAKLDLERTVIRAPADGWVTNLNVYTGEFITRGSTAVALVKQNSFYVLAYMEETKLEGVRPGYRAEITPLGSNKVLKGTVDSVAAGVTNASSTRDDKGMATIDSDLEWVRLAQRVPVRIRLDNQQENIWPAGTTATVVVTGKQDRDESQDSFFRKMAHRLREFG</sequence>
<accession>Q83Q03</accession>
<accession>Q7BZP0</accession>